<dbReference type="EMBL" id="CP000950">
    <property type="protein sequence ID" value="ACA66588.1"/>
    <property type="molecule type" value="Genomic_DNA"/>
</dbReference>
<dbReference type="RefSeq" id="WP_002212323.1">
    <property type="nucleotide sequence ID" value="NZ_CP009792.1"/>
</dbReference>
<dbReference type="SMR" id="B1JIV3"/>
<dbReference type="GeneID" id="97454224"/>
<dbReference type="KEGG" id="ypy:YPK_0275"/>
<dbReference type="PATRIC" id="fig|502800.11.peg.881"/>
<dbReference type="GO" id="GO:0015935">
    <property type="term" value="C:small ribosomal subunit"/>
    <property type="evidence" value="ECO:0007669"/>
    <property type="project" value="InterPro"/>
</dbReference>
<dbReference type="GO" id="GO:0019843">
    <property type="term" value="F:rRNA binding"/>
    <property type="evidence" value="ECO:0007669"/>
    <property type="project" value="UniProtKB-UniRule"/>
</dbReference>
<dbReference type="GO" id="GO:0003735">
    <property type="term" value="F:structural constituent of ribosome"/>
    <property type="evidence" value="ECO:0007669"/>
    <property type="project" value="InterPro"/>
</dbReference>
<dbReference type="GO" id="GO:0000049">
    <property type="term" value="F:tRNA binding"/>
    <property type="evidence" value="ECO:0007669"/>
    <property type="project" value="UniProtKB-UniRule"/>
</dbReference>
<dbReference type="GO" id="GO:0006412">
    <property type="term" value="P:translation"/>
    <property type="evidence" value="ECO:0007669"/>
    <property type="project" value="UniProtKB-UniRule"/>
</dbReference>
<dbReference type="CDD" id="cd03368">
    <property type="entry name" value="Ribosomal_S12"/>
    <property type="match status" value="1"/>
</dbReference>
<dbReference type="FunFam" id="2.40.50.140:FF:000001">
    <property type="entry name" value="30S ribosomal protein S12"/>
    <property type="match status" value="1"/>
</dbReference>
<dbReference type="Gene3D" id="2.40.50.140">
    <property type="entry name" value="Nucleic acid-binding proteins"/>
    <property type="match status" value="1"/>
</dbReference>
<dbReference type="HAMAP" id="MF_00403_B">
    <property type="entry name" value="Ribosomal_uS12_B"/>
    <property type="match status" value="1"/>
</dbReference>
<dbReference type="InterPro" id="IPR012340">
    <property type="entry name" value="NA-bd_OB-fold"/>
</dbReference>
<dbReference type="InterPro" id="IPR006032">
    <property type="entry name" value="Ribosomal_uS12"/>
</dbReference>
<dbReference type="InterPro" id="IPR005679">
    <property type="entry name" value="Ribosomal_uS12_bac"/>
</dbReference>
<dbReference type="NCBIfam" id="TIGR00981">
    <property type="entry name" value="rpsL_bact"/>
    <property type="match status" value="1"/>
</dbReference>
<dbReference type="PANTHER" id="PTHR11652">
    <property type="entry name" value="30S RIBOSOMAL PROTEIN S12 FAMILY MEMBER"/>
    <property type="match status" value="1"/>
</dbReference>
<dbReference type="Pfam" id="PF00164">
    <property type="entry name" value="Ribosom_S12_S23"/>
    <property type="match status" value="1"/>
</dbReference>
<dbReference type="PIRSF" id="PIRSF002133">
    <property type="entry name" value="Ribosomal_S12/S23"/>
    <property type="match status" value="1"/>
</dbReference>
<dbReference type="PRINTS" id="PR01034">
    <property type="entry name" value="RIBOSOMALS12"/>
</dbReference>
<dbReference type="SUPFAM" id="SSF50249">
    <property type="entry name" value="Nucleic acid-binding proteins"/>
    <property type="match status" value="1"/>
</dbReference>
<dbReference type="PROSITE" id="PS00055">
    <property type="entry name" value="RIBOSOMAL_S12"/>
    <property type="match status" value="1"/>
</dbReference>
<gene>
    <name evidence="2" type="primary">rpsL</name>
    <name type="ordered locus">YPK_0275</name>
</gene>
<sequence length="124" mass="13730">MATINQLVRKPRSMKVAKSNVPALEACPQKRGVCTRVYTTTPKKPNSALRKVCRVRLTNGFEVTSYIGGEGHNLQEHSVILIRGGRVKDLPGVRYHTVRGALDCSGVKDRKQSRSKYGVKKPKA</sequence>
<protein>
    <recommendedName>
        <fullName evidence="2">Small ribosomal subunit protein uS12</fullName>
    </recommendedName>
    <alternativeName>
        <fullName evidence="3">30S ribosomal protein S12</fullName>
    </alternativeName>
</protein>
<reference key="1">
    <citation type="submission" date="2008-02" db="EMBL/GenBank/DDBJ databases">
        <title>Complete sequence of Yersinia pseudotuberculosis YPIII.</title>
        <authorList>
            <consortium name="US DOE Joint Genome Institute"/>
            <person name="Copeland A."/>
            <person name="Lucas S."/>
            <person name="Lapidus A."/>
            <person name="Glavina del Rio T."/>
            <person name="Dalin E."/>
            <person name="Tice H."/>
            <person name="Bruce D."/>
            <person name="Goodwin L."/>
            <person name="Pitluck S."/>
            <person name="Munk A.C."/>
            <person name="Brettin T."/>
            <person name="Detter J.C."/>
            <person name="Han C."/>
            <person name="Tapia R."/>
            <person name="Schmutz J."/>
            <person name="Larimer F."/>
            <person name="Land M."/>
            <person name="Hauser L."/>
            <person name="Challacombe J.F."/>
            <person name="Green L."/>
            <person name="Lindler L.E."/>
            <person name="Nikolich M.P."/>
            <person name="Richardson P."/>
        </authorList>
    </citation>
    <scope>NUCLEOTIDE SEQUENCE [LARGE SCALE GENOMIC DNA]</scope>
    <source>
        <strain>YPIII</strain>
    </source>
</reference>
<accession>B1JIV3</accession>
<proteinExistence type="inferred from homology"/>
<comment type="function">
    <text evidence="2">With S4 and S5 plays an important role in translational accuracy.</text>
</comment>
<comment type="function">
    <text evidence="2">Interacts with and stabilizes bases of the 16S rRNA that are involved in tRNA selection in the A site and with the mRNA backbone. Located at the interface of the 30S and 50S subunits, it traverses the body of the 30S subunit contacting proteins on the other side and probably holding the rRNA structure together. The combined cluster of proteins S8, S12 and S17 appears to hold together the shoulder and platform of the 30S subunit.</text>
</comment>
<comment type="subunit">
    <text evidence="2">Part of the 30S ribosomal subunit. Contacts proteins S8 and S17. May interact with IF1 in the 30S initiation complex.</text>
</comment>
<comment type="similarity">
    <text evidence="2">Belongs to the universal ribosomal protein uS12 family.</text>
</comment>
<name>RS12_YERPY</name>
<evidence type="ECO:0000250" key="1"/>
<evidence type="ECO:0000255" key="2">
    <source>
        <dbReference type="HAMAP-Rule" id="MF_00403"/>
    </source>
</evidence>
<evidence type="ECO:0000305" key="3"/>
<keyword id="KW-0488">Methylation</keyword>
<keyword id="KW-0687">Ribonucleoprotein</keyword>
<keyword id="KW-0689">Ribosomal protein</keyword>
<keyword id="KW-0694">RNA-binding</keyword>
<keyword id="KW-0699">rRNA-binding</keyword>
<keyword id="KW-0820">tRNA-binding</keyword>
<feature type="chain" id="PRO_1000123543" description="Small ribosomal subunit protein uS12">
    <location>
        <begin position="1"/>
        <end position="124"/>
    </location>
</feature>
<feature type="modified residue" description="3-methylthioaspartic acid" evidence="1">
    <location>
        <position position="89"/>
    </location>
</feature>
<organism>
    <name type="scientific">Yersinia pseudotuberculosis serotype O:3 (strain YPIII)</name>
    <dbReference type="NCBI Taxonomy" id="502800"/>
    <lineage>
        <taxon>Bacteria</taxon>
        <taxon>Pseudomonadati</taxon>
        <taxon>Pseudomonadota</taxon>
        <taxon>Gammaproteobacteria</taxon>
        <taxon>Enterobacterales</taxon>
        <taxon>Yersiniaceae</taxon>
        <taxon>Yersinia</taxon>
    </lineage>
</organism>